<evidence type="ECO:0000255" key="1">
    <source>
        <dbReference type="HAMAP-Rule" id="MF_01844"/>
    </source>
</evidence>
<reference key="1">
    <citation type="journal article" date="2009" name="J. Bacteriol.">
        <title>Complete genome sequence of Haemophilus parasuis SH0165.</title>
        <authorList>
            <person name="Yue M."/>
            <person name="Yang F."/>
            <person name="Yang J."/>
            <person name="Bei W."/>
            <person name="Cai X."/>
            <person name="Chen L."/>
            <person name="Dong J."/>
            <person name="Zhou R."/>
            <person name="Jin M."/>
            <person name="Jin Q."/>
            <person name="Chen H."/>
        </authorList>
    </citation>
    <scope>NUCLEOTIDE SEQUENCE [LARGE SCALE GENOMIC DNA]</scope>
    <source>
        <strain>SH0165</strain>
    </source>
</reference>
<keyword id="KW-0050">Antiport</keyword>
<keyword id="KW-0997">Cell inner membrane</keyword>
<keyword id="KW-1003">Cell membrane</keyword>
<keyword id="KW-0406">Ion transport</keyword>
<keyword id="KW-0472">Membrane</keyword>
<keyword id="KW-1185">Reference proteome</keyword>
<keyword id="KW-0915">Sodium</keyword>
<keyword id="KW-0739">Sodium transport</keyword>
<keyword id="KW-0812">Transmembrane</keyword>
<keyword id="KW-1133">Transmembrane helix</keyword>
<keyword id="KW-0813">Transport</keyword>
<name>NHAA_GLAP5</name>
<proteinExistence type="inferred from homology"/>
<comment type="function">
    <text evidence="1">Na(+)/H(+) antiporter that extrudes sodium in exchange for external protons.</text>
</comment>
<comment type="catalytic activity">
    <reaction evidence="1">
        <text>Na(+)(in) + 2 H(+)(out) = Na(+)(out) + 2 H(+)(in)</text>
        <dbReference type="Rhea" id="RHEA:29251"/>
        <dbReference type="ChEBI" id="CHEBI:15378"/>
        <dbReference type="ChEBI" id="CHEBI:29101"/>
    </reaction>
    <physiologicalReaction direction="left-to-right" evidence="1">
        <dbReference type="Rhea" id="RHEA:29252"/>
    </physiologicalReaction>
</comment>
<comment type="subcellular location">
    <subcellularLocation>
        <location evidence="1">Cell inner membrane</location>
        <topology evidence="1">Multi-pass membrane protein</topology>
    </subcellularLocation>
</comment>
<comment type="similarity">
    <text evidence="1">Belongs to the NhaA Na(+)/H(+) (TC 2.A.33) antiporter family.</text>
</comment>
<protein>
    <recommendedName>
        <fullName evidence="1">Na(+)/H(+) antiporter NhaA</fullName>
    </recommendedName>
    <alternativeName>
        <fullName evidence="1">Sodium/proton antiporter NhaA</fullName>
    </alternativeName>
</protein>
<accession>B8F7T0</accession>
<feature type="chain" id="PRO_1000188436" description="Na(+)/H(+) antiporter NhaA">
    <location>
        <begin position="1"/>
        <end position="397"/>
    </location>
</feature>
<feature type="transmembrane region" description="Helical" evidence="1">
    <location>
        <begin position="14"/>
        <end position="34"/>
    </location>
</feature>
<feature type="transmembrane region" description="Helical" evidence="1">
    <location>
        <begin position="36"/>
        <end position="56"/>
    </location>
</feature>
<feature type="transmembrane region" description="Helical" evidence="1">
    <location>
        <begin position="59"/>
        <end position="79"/>
    </location>
</feature>
<feature type="transmembrane region" description="Helical" evidence="1">
    <location>
        <begin position="95"/>
        <end position="115"/>
    </location>
</feature>
<feature type="transmembrane region" description="Helical" evidence="1">
    <location>
        <begin position="125"/>
        <end position="145"/>
    </location>
</feature>
<feature type="transmembrane region" description="Helical" evidence="1">
    <location>
        <begin position="154"/>
        <end position="174"/>
    </location>
</feature>
<feature type="transmembrane region" description="Helical" evidence="1">
    <location>
        <begin position="177"/>
        <end position="197"/>
    </location>
</feature>
<feature type="transmembrane region" description="Helical" evidence="1">
    <location>
        <begin position="204"/>
        <end position="224"/>
    </location>
</feature>
<feature type="transmembrane region" description="Helical" evidence="1">
    <location>
        <begin position="254"/>
        <end position="274"/>
    </location>
</feature>
<feature type="transmembrane region" description="Helical" evidence="1">
    <location>
        <begin position="292"/>
        <end position="312"/>
    </location>
</feature>
<feature type="transmembrane region" description="Helical" evidence="1">
    <location>
        <begin position="328"/>
        <end position="348"/>
    </location>
</feature>
<feature type="transmembrane region" description="Helical" evidence="1">
    <location>
        <begin position="365"/>
        <end position="385"/>
    </location>
</feature>
<gene>
    <name evidence="1" type="primary">nhaA</name>
    <name type="ordered locus">HAPS_1894</name>
</gene>
<sequence length="397" mass="42532">MIQHIRKFLQLESASGILLLTFAMFAMLFANTPLKDLYFDFLSMPVSIQIGLFSIYKPLLMWVNDGFMAVFFVLIGLEVKREMMVGAISNYQRAIFPAIGALGGMIVPALVFTLINNDSPEFQQGWAIPMATDIAFALGVLGLLGKRVPFALKIFLLALAIIDDLGAIVVIAIFFSHELSTTALISAAIAIAVLIIMNRMRVTAICAYMVVGLILWASVLKSGVHATLAGVIIGFCVPLKGKNGEEPLAHFEHLLAPWCSFVILPLFAFSNAGVSLAGMSLSTLFSPLTMGVALGLLVGKTLGVFSFSFLAVKLGIAQLSEGINFKQIFAVSVLCGIGFTMSMFLAGLAFGGDEADGQFISLARLGILIGSGISAVLGYYLLKLCTMPNIHINNLSK</sequence>
<organism>
    <name type="scientific">Glaesserella parasuis serovar 5 (strain SH0165)</name>
    <name type="common">Haemophilus parasuis</name>
    <dbReference type="NCBI Taxonomy" id="557723"/>
    <lineage>
        <taxon>Bacteria</taxon>
        <taxon>Pseudomonadati</taxon>
        <taxon>Pseudomonadota</taxon>
        <taxon>Gammaproteobacteria</taxon>
        <taxon>Pasteurellales</taxon>
        <taxon>Pasteurellaceae</taxon>
        <taxon>Glaesserella</taxon>
    </lineage>
</organism>
<dbReference type="EMBL" id="CP001321">
    <property type="protein sequence ID" value="ACL33382.1"/>
    <property type="molecule type" value="Genomic_DNA"/>
</dbReference>
<dbReference type="RefSeq" id="WP_010787169.1">
    <property type="nucleotide sequence ID" value="NC_011852.1"/>
</dbReference>
<dbReference type="SMR" id="B8F7T0"/>
<dbReference type="STRING" id="557723.HAPS_1894"/>
<dbReference type="KEGG" id="hap:HAPS_1894"/>
<dbReference type="PATRIC" id="fig|557723.8.peg.1879"/>
<dbReference type="HOGENOM" id="CLU_015803_1_0_6"/>
<dbReference type="Proteomes" id="UP000006743">
    <property type="component" value="Chromosome"/>
</dbReference>
<dbReference type="GO" id="GO:0005886">
    <property type="term" value="C:plasma membrane"/>
    <property type="evidence" value="ECO:0007669"/>
    <property type="project" value="UniProtKB-SubCell"/>
</dbReference>
<dbReference type="GO" id="GO:0015385">
    <property type="term" value="F:sodium:proton antiporter activity"/>
    <property type="evidence" value="ECO:0007669"/>
    <property type="project" value="TreeGrafter"/>
</dbReference>
<dbReference type="GO" id="GO:0006885">
    <property type="term" value="P:regulation of pH"/>
    <property type="evidence" value="ECO:0007669"/>
    <property type="project" value="InterPro"/>
</dbReference>
<dbReference type="Gene3D" id="1.20.1530.10">
    <property type="entry name" value="Na+/H+ antiporter like domain"/>
    <property type="match status" value="1"/>
</dbReference>
<dbReference type="HAMAP" id="MF_01844">
    <property type="entry name" value="NhaA"/>
    <property type="match status" value="1"/>
</dbReference>
<dbReference type="InterPro" id="IPR023171">
    <property type="entry name" value="Na/H_antiporter_dom_sf"/>
</dbReference>
<dbReference type="InterPro" id="IPR004670">
    <property type="entry name" value="NhaA"/>
</dbReference>
<dbReference type="NCBIfam" id="TIGR00773">
    <property type="entry name" value="NhaA"/>
    <property type="match status" value="1"/>
</dbReference>
<dbReference type="NCBIfam" id="NF007111">
    <property type="entry name" value="PRK09560.1"/>
    <property type="match status" value="1"/>
</dbReference>
<dbReference type="NCBIfam" id="NF007112">
    <property type="entry name" value="PRK09561.1"/>
    <property type="match status" value="1"/>
</dbReference>
<dbReference type="PANTHER" id="PTHR30341:SF0">
    <property type="entry name" value="NA(+)_H(+) ANTIPORTER NHAA"/>
    <property type="match status" value="1"/>
</dbReference>
<dbReference type="PANTHER" id="PTHR30341">
    <property type="entry name" value="SODIUM ION/PROTON ANTIPORTER NHAA-RELATED"/>
    <property type="match status" value="1"/>
</dbReference>
<dbReference type="Pfam" id="PF06965">
    <property type="entry name" value="Na_H_antiport_1"/>
    <property type="match status" value="1"/>
</dbReference>